<name>LEPA_THET2</name>
<dbReference type="EC" id="3.6.5.n1" evidence="1"/>
<dbReference type="EMBL" id="AE017221">
    <property type="protein sequence ID" value="AAS80737.1"/>
    <property type="molecule type" value="Genomic_DNA"/>
</dbReference>
<dbReference type="RefSeq" id="WP_011172837.1">
    <property type="nucleotide sequence ID" value="NC_005835.1"/>
</dbReference>
<dbReference type="SMR" id="Q72KV2"/>
<dbReference type="KEGG" id="tth:TT_C0389"/>
<dbReference type="eggNOG" id="COG0481">
    <property type="taxonomic scope" value="Bacteria"/>
</dbReference>
<dbReference type="HOGENOM" id="CLU_009995_3_3_0"/>
<dbReference type="OrthoDB" id="9804431at2"/>
<dbReference type="Proteomes" id="UP000000592">
    <property type="component" value="Chromosome"/>
</dbReference>
<dbReference type="GO" id="GO:0005886">
    <property type="term" value="C:plasma membrane"/>
    <property type="evidence" value="ECO:0007669"/>
    <property type="project" value="UniProtKB-SubCell"/>
</dbReference>
<dbReference type="GO" id="GO:0005525">
    <property type="term" value="F:GTP binding"/>
    <property type="evidence" value="ECO:0007669"/>
    <property type="project" value="UniProtKB-UniRule"/>
</dbReference>
<dbReference type="GO" id="GO:0003924">
    <property type="term" value="F:GTPase activity"/>
    <property type="evidence" value="ECO:0007669"/>
    <property type="project" value="UniProtKB-UniRule"/>
</dbReference>
<dbReference type="GO" id="GO:0043022">
    <property type="term" value="F:ribosome binding"/>
    <property type="evidence" value="ECO:0007669"/>
    <property type="project" value="UniProtKB-UniRule"/>
</dbReference>
<dbReference type="GO" id="GO:0003746">
    <property type="term" value="F:translation elongation factor activity"/>
    <property type="evidence" value="ECO:0007669"/>
    <property type="project" value="UniProtKB-UniRule"/>
</dbReference>
<dbReference type="GO" id="GO:0045727">
    <property type="term" value="P:positive regulation of translation"/>
    <property type="evidence" value="ECO:0007669"/>
    <property type="project" value="UniProtKB-UniRule"/>
</dbReference>
<dbReference type="CDD" id="cd03699">
    <property type="entry name" value="EF4_II"/>
    <property type="match status" value="1"/>
</dbReference>
<dbReference type="CDD" id="cd16260">
    <property type="entry name" value="EF4_III"/>
    <property type="match status" value="1"/>
</dbReference>
<dbReference type="CDD" id="cd01890">
    <property type="entry name" value="LepA"/>
    <property type="match status" value="1"/>
</dbReference>
<dbReference type="CDD" id="cd03709">
    <property type="entry name" value="lepA_C"/>
    <property type="match status" value="1"/>
</dbReference>
<dbReference type="FunFam" id="3.40.50.300:FF:000078">
    <property type="entry name" value="Elongation factor 4"/>
    <property type="match status" value="1"/>
</dbReference>
<dbReference type="FunFam" id="2.40.30.10:FF:000015">
    <property type="entry name" value="Translation factor GUF1, mitochondrial"/>
    <property type="match status" value="1"/>
</dbReference>
<dbReference type="FunFam" id="3.30.70.240:FF:000007">
    <property type="entry name" value="Translation factor GUF1, mitochondrial"/>
    <property type="match status" value="1"/>
</dbReference>
<dbReference type="FunFam" id="3.30.70.2570:FF:000001">
    <property type="entry name" value="Translation factor GUF1, mitochondrial"/>
    <property type="match status" value="1"/>
</dbReference>
<dbReference type="FunFam" id="3.30.70.870:FF:000004">
    <property type="entry name" value="Translation factor GUF1, mitochondrial"/>
    <property type="match status" value="1"/>
</dbReference>
<dbReference type="Gene3D" id="3.30.70.240">
    <property type="match status" value="1"/>
</dbReference>
<dbReference type="Gene3D" id="3.30.70.2570">
    <property type="entry name" value="Elongation factor 4, C-terminal domain"/>
    <property type="match status" value="1"/>
</dbReference>
<dbReference type="Gene3D" id="3.30.70.870">
    <property type="entry name" value="Elongation Factor G (Translational Gtpase), domain 3"/>
    <property type="match status" value="1"/>
</dbReference>
<dbReference type="Gene3D" id="3.40.50.300">
    <property type="entry name" value="P-loop containing nucleotide triphosphate hydrolases"/>
    <property type="match status" value="1"/>
</dbReference>
<dbReference type="Gene3D" id="2.40.30.10">
    <property type="entry name" value="Translation factors"/>
    <property type="match status" value="1"/>
</dbReference>
<dbReference type="HAMAP" id="MF_00071">
    <property type="entry name" value="LepA"/>
    <property type="match status" value="1"/>
</dbReference>
<dbReference type="InterPro" id="IPR006297">
    <property type="entry name" value="EF-4"/>
</dbReference>
<dbReference type="InterPro" id="IPR035647">
    <property type="entry name" value="EFG_III/V"/>
</dbReference>
<dbReference type="InterPro" id="IPR000640">
    <property type="entry name" value="EFG_V-like"/>
</dbReference>
<dbReference type="InterPro" id="IPR004161">
    <property type="entry name" value="EFTu-like_2"/>
</dbReference>
<dbReference type="InterPro" id="IPR031157">
    <property type="entry name" value="G_TR_CS"/>
</dbReference>
<dbReference type="InterPro" id="IPR038363">
    <property type="entry name" value="LepA_C_sf"/>
</dbReference>
<dbReference type="InterPro" id="IPR013842">
    <property type="entry name" value="LepA_CTD"/>
</dbReference>
<dbReference type="InterPro" id="IPR035654">
    <property type="entry name" value="LepA_IV"/>
</dbReference>
<dbReference type="InterPro" id="IPR027417">
    <property type="entry name" value="P-loop_NTPase"/>
</dbReference>
<dbReference type="InterPro" id="IPR005225">
    <property type="entry name" value="Small_GTP-bd"/>
</dbReference>
<dbReference type="InterPro" id="IPR000795">
    <property type="entry name" value="T_Tr_GTP-bd_dom"/>
</dbReference>
<dbReference type="InterPro" id="IPR009000">
    <property type="entry name" value="Transl_B-barrel_sf"/>
</dbReference>
<dbReference type="NCBIfam" id="TIGR01393">
    <property type="entry name" value="lepA"/>
    <property type="match status" value="1"/>
</dbReference>
<dbReference type="NCBIfam" id="TIGR00231">
    <property type="entry name" value="small_GTP"/>
    <property type="match status" value="1"/>
</dbReference>
<dbReference type="PANTHER" id="PTHR43512:SF4">
    <property type="entry name" value="TRANSLATION FACTOR GUF1 HOMOLOG, CHLOROPLASTIC"/>
    <property type="match status" value="1"/>
</dbReference>
<dbReference type="PANTHER" id="PTHR43512">
    <property type="entry name" value="TRANSLATION FACTOR GUF1-RELATED"/>
    <property type="match status" value="1"/>
</dbReference>
<dbReference type="Pfam" id="PF00679">
    <property type="entry name" value="EFG_C"/>
    <property type="match status" value="1"/>
</dbReference>
<dbReference type="Pfam" id="PF00009">
    <property type="entry name" value="GTP_EFTU"/>
    <property type="match status" value="1"/>
</dbReference>
<dbReference type="Pfam" id="PF03144">
    <property type="entry name" value="GTP_EFTU_D2"/>
    <property type="match status" value="1"/>
</dbReference>
<dbReference type="Pfam" id="PF06421">
    <property type="entry name" value="LepA_C"/>
    <property type="match status" value="1"/>
</dbReference>
<dbReference type="PRINTS" id="PR00315">
    <property type="entry name" value="ELONGATNFCT"/>
</dbReference>
<dbReference type="SMART" id="SM00838">
    <property type="entry name" value="EFG_C"/>
    <property type="match status" value="1"/>
</dbReference>
<dbReference type="SUPFAM" id="SSF54980">
    <property type="entry name" value="EF-G C-terminal domain-like"/>
    <property type="match status" value="2"/>
</dbReference>
<dbReference type="SUPFAM" id="SSF52540">
    <property type="entry name" value="P-loop containing nucleoside triphosphate hydrolases"/>
    <property type="match status" value="1"/>
</dbReference>
<dbReference type="SUPFAM" id="SSF50447">
    <property type="entry name" value="Translation proteins"/>
    <property type="match status" value="1"/>
</dbReference>
<dbReference type="PROSITE" id="PS00301">
    <property type="entry name" value="G_TR_1"/>
    <property type="match status" value="1"/>
</dbReference>
<dbReference type="PROSITE" id="PS51722">
    <property type="entry name" value="G_TR_2"/>
    <property type="match status" value="1"/>
</dbReference>
<organism>
    <name type="scientific">Thermus thermophilus (strain ATCC BAA-163 / DSM 7039 / HB27)</name>
    <dbReference type="NCBI Taxonomy" id="262724"/>
    <lineage>
        <taxon>Bacteria</taxon>
        <taxon>Thermotogati</taxon>
        <taxon>Deinococcota</taxon>
        <taxon>Deinococci</taxon>
        <taxon>Thermales</taxon>
        <taxon>Thermaceae</taxon>
        <taxon>Thermus</taxon>
    </lineage>
</organism>
<protein>
    <recommendedName>
        <fullName evidence="1">Elongation factor 4</fullName>
        <shortName evidence="1">EF-4</shortName>
        <ecNumber evidence="1">3.6.5.n1</ecNumber>
    </recommendedName>
    <alternativeName>
        <fullName evidence="1">Ribosomal back-translocase LepA</fullName>
    </alternativeName>
</protein>
<reference key="1">
    <citation type="journal article" date="2004" name="Nat. Biotechnol.">
        <title>The genome sequence of the extreme thermophile Thermus thermophilus.</title>
        <authorList>
            <person name="Henne A."/>
            <person name="Brueggemann H."/>
            <person name="Raasch C."/>
            <person name="Wiezer A."/>
            <person name="Hartsch T."/>
            <person name="Liesegang H."/>
            <person name="Johann A."/>
            <person name="Lienard T."/>
            <person name="Gohl O."/>
            <person name="Martinez-Arias R."/>
            <person name="Jacobi C."/>
            <person name="Starkuviene V."/>
            <person name="Schlenczeck S."/>
            <person name="Dencker S."/>
            <person name="Huber R."/>
            <person name="Klenk H.-P."/>
            <person name="Kramer W."/>
            <person name="Merkl R."/>
            <person name="Gottschalk G."/>
            <person name="Fritz H.-J."/>
        </authorList>
    </citation>
    <scope>NUCLEOTIDE SEQUENCE [LARGE SCALE GENOMIC DNA]</scope>
    <source>
        <strain>ATCC BAA-163 / DSM 7039 / HB27</strain>
    </source>
</reference>
<sequence length="610" mass="67711">MVRMDLSRIRNFSIIAHVDHGKSTLADRILELTHAVSDREMREQFLDSLELERERGITIKASAVRVRYRAKDGEEYVFHLIDTPGHVDFTYEVSRALAAVEGVLLVVDASQGVEAETLAKFYMALEHGHVIIPVINKIDLPNARPLEVALEVEEVLGLPADEAIFASGKTGEGVEEILEAIVQRIPPPKGDPEAPLKALIFDSVYDAYQGVIPYLRLFEGRVRPGDRIRIYSTGKEFTVDKVGVFTPQGLVATEALEAGEVGWLVAAIRDIHDVQVGDTLTLADRPTPSPYPGFRPAKPVVFAGLYPVDSGEYGKLRDALEKLKLNDAALTFEPESSTALGFGFRCGFLGLLHAEIVQERLEREFGLSLIATAPSVVYKVRLKSGEEVEVHNPADLPDPTRIEEILEPYVKLTIFTPEEYVGSLMQLLQEKRGRLVNMNYLPGAQKRVELVYEAPFAEILYDFHDRLKSVSRGYASMDYEQIGYRPGDLVKVNVLVHGEVVDALTFIAHREKAYTMARAIVDKLAEVIPRQLFEVPIQAAIGGKIIARATVKALRKDVLAKCYGGDVTRKKKLLEKQKEGKKRLKAIGKVEVPQEAFLAVLSAGRDEPKG</sequence>
<proteinExistence type="inferred from homology"/>
<gene>
    <name evidence="1" type="primary">lepA</name>
    <name type="ordered locus">TT_C0389</name>
</gene>
<feature type="chain" id="PRO_0000176363" description="Elongation factor 4">
    <location>
        <begin position="1"/>
        <end position="610"/>
    </location>
</feature>
<feature type="domain" description="tr-type G">
    <location>
        <begin position="7"/>
        <end position="189"/>
    </location>
</feature>
<feature type="binding site" evidence="1">
    <location>
        <begin position="19"/>
        <end position="24"/>
    </location>
    <ligand>
        <name>GTP</name>
        <dbReference type="ChEBI" id="CHEBI:37565"/>
    </ligand>
</feature>
<feature type="binding site" evidence="1">
    <location>
        <begin position="136"/>
        <end position="139"/>
    </location>
    <ligand>
        <name>GTP</name>
        <dbReference type="ChEBI" id="CHEBI:37565"/>
    </ligand>
</feature>
<comment type="function">
    <text evidence="1">Required for accurate and efficient protein synthesis under certain stress conditions. May act as a fidelity factor of the translation reaction, by catalyzing a one-codon backward translocation of tRNAs on improperly translocated ribosomes. Back-translocation proceeds from a post-translocation (POST) complex to a pre-translocation (PRE) complex, thus giving elongation factor G a second chance to translocate the tRNAs correctly. Binds to ribosomes in a GTP-dependent manner.</text>
</comment>
<comment type="catalytic activity">
    <reaction evidence="1">
        <text>GTP + H2O = GDP + phosphate + H(+)</text>
        <dbReference type="Rhea" id="RHEA:19669"/>
        <dbReference type="ChEBI" id="CHEBI:15377"/>
        <dbReference type="ChEBI" id="CHEBI:15378"/>
        <dbReference type="ChEBI" id="CHEBI:37565"/>
        <dbReference type="ChEBI" id="CHEBI:43474"/>
        <dbReference type="ChEBI" id="CHEBI:58189"/>
        <dbReference type="EC" id="3.6.5.n1"/>
    </reaction>
</comment>
<comment type="subcellular location">
    <subcellularLocation>
        <location evidence="1">Cell inner membrane</location>
        <topology evidence="1">Peripheral membrane protein</topology>
        <orientation evidence="1">Cytoplasmic side</orientation>
    </subcellularLocation>
</comment>
<comment type="similarity">
    <text evidence="1">Belongs to the TRAFAC class translation factor GTPase superfamily. Classic translation factor GTPase family. LepA subfamily.</text>
</comment>
<accession>Q72KV2</accession>
<evidence type="ECO:0000255" key="1">
    <source>
        <dbReference type="HAMAP-Rule" id="MF_00071"/>
    </source>
</evidence>
<keyword id="KW-0997">Cell inner membrane</keyword>
<keyword id="KW-1003">Cell membrane</keyword>
<keyword id="KW-0342">GTP-binding</keyword>
<keyword id="KW-0378">Hydrolase</keyword>
<keyword id="KW-0472">Membrane</keyword>
<keyword id="KW-0547">Nucleotide-binding</keyword>
<keyword id="KW-0648">Protein biosynthesis</keyword>